<feature type="signal peptide" evidence="1">
    <location>
        <begin position="1"/>
        <end position="20"/>
    </location>
</feature>
<feature type="chain" id="PRO_5004200546" description="Zwei Ig domain protein zig-6">
    <location>
        <begin position="21"/>
        <end position="243"/>
    </location>
</feature>
<feature type="domain" description="Ig-like C2-type 1" evidence="2">
    <location>
        <begin position="30"/>
        <end position="118"/>
    </location>
</feature>
<feature type="domain" description="Ig-like C2-type 2" evidence="2">
    <location>
        <begin position="133"/>
        <end position="212"/>
    </location>
</feature>
<feature type="glycosylation site" description="N-linked (GlcNAc...) asparagine" evidence="3">
    <location>
        <position position="91"/>
    </location>
</feature>
<feature type="glycosylation site" description="N-linked (GlcNAc...) asparagine" evidence="3">
    <location>
        <position position="142"/>
    </location>
</feature>
<feature type="disulfide bond" evidence="2">
    <location>
        <begin position="47"/>
        <end position="102"/>
    </location>
</feature>
<feature type="disulfide bond" evidence="2">
    <location>
        <begin position="145"/>
        <end position="196"/>
    </location>
</feature>
<name>ZIG6_CAEEL</name>
<accession>Q22125</accession>
<reference evidence="9" key="1">
    <citation type="journal article" date="1998" name="Science">
        <title>Genome sequence of the nematode C. elegans: a platform for investigating biology.</title>
        <authorList>
            <consortium name="The C. elegans sequencing consortium"/>
        </authorList>
    </citation>
    <scope>NUCLEOTIDE SEQUENCE [LARGE SCALE GENOMIC DNA]</scope>
    <source>
        <strain evidence="9">Bristol N2</strain>
    </source>
</reference>
<reference evidence="8" key="2">
    <citation type="journal article" date="2002" name="Science">
        <title>Immunoglobulin-domain proteins required for maintenance of ventral nerve cord organization.</title>
        <authorList>
            <person name="Aurelio O."/>
            <person name="Hall D."/>
            <person name="Hobert O."/>
        </authorList>
    </citation>
    <scope>TISSUE SPECIFICITY</scope>
</reference>
<reference evidence="8" key="3">
    <citation type="journal article" date="2009" name="Genetics">
        <title>The small, secreted immunoglobulin protein ZIG-3 maintains axon position in Caenorhabditis elegans.</title>
        <authorList>
            <person name="Benard C."/>
            <person name="Tjoe N."/>
            <person name="Boulin T."/>
            <person name="Recio J."/>
            <person name="Hobert O."/>
        </authorList>
    </citation>
    <scope>FUNCTION</scope>
    <scope>DISRUPTION PHENOTYPE</scope>
</reference>
<reference evidence="8" key="4">
    <citation type="journal article" date="2012" name="PLoS Genet.">
        <title>The secreted immunoglobulin domain proteins ZIG-5 and ZIG-8 cooperate with L1CAM/SAX-7 to maintain nervous system integrity.</title>
        <authorList>
            <person name="Benard C.Y."/>
            <person name="Blanchette C."/>
            <person name="Recio J."/>
            <person name="Hobert O."/>
        </authorList>
    </citation>
    <scope>FUNCTION</scope>
    <scope>DISRUPTION PHENOTYPE</scope>
</reference>
<proteinExistence type="evidence at transcript level"/>
<organism evidence="9">
    <name type="scientific">Caenorhabditis elegans</name>
    <dbReference type="NCBI Taxonomy" id="6239"/>
    <lineage>
        <taxon>Eukaryota</taxon>
        <taxon>Metazoa</taxon>
        <taxon>Ecdysozoa</taxon>
        <taxon>Nematoda</taxon>
        <taxon>Chromadorea</taxon>
        <taxon>Rhabditida</taxon>
        <taxon>Rhabditina</taxon>
        <taxon>Rhabditomorpha</taxon>
        <taxon>Rhabditoidea</taxon>
        <taxon>Rhabditidae</taxon>
        <taxon>Peloderinae</taxon>
        <taxon>Caenorhabditis</taxon>
    </lineage>
</organism>
<comment type="function">
    <text evidence="5 6">Probably not involved in maintaining the position of ASI and ASH head neuron cell bodies and ventral nerve cord axons of PVQ, PVP, RMEV, AVK and HSN neurons.</text>
</comment>
<comment type="subcellular location">
    <subcellularLocation>
        <location evidence="1">Secreted</location>
    </subcellularLocation>
</comment>
<comment type="tissue specificity">
    <text evidence="4">Expressed in head and tail body wall muscles.</text>
</comment>
<comment type="disruption phenotype">
    <text evidence="5 6">No visible phenotype (PubMed:19737747, PubMed:22829780). No defect in the positioning of ASI and ASH neuron cell bodies (PubMed:22829780). No defect in the positioning of PQV, PVP, RMEV, HSN and AVK axons in the ventral nerve cord (PubMed:19737747).</text>
</comment>
<sequence>MTKLCLLLLPLVFLVSYSFAEEEITISISPNANPVQKPIGHQISLVCSIKKTDSNGEKPGMIWKKHGGLDRTGNVEVKKLDDYTLGLIIRNSSVEDSGVYYCQAQVGSKVYMNKMDVIVFEDIVFRDKQLHFGQVLATASVNISCEVSAKKDSVITYWTRHGKQILEGGKHKFYSRGSILEIQNYQPEQDAGQYTCEVFHVSSGSSNTKTVTLGTTGEKNYVACQQMCNSFCTDVHNKVFTNN</sequence>
<protein>
    <recommendedName>
        <fullName evidence="7">Zwei Ig domain protein zig-6</fullName>
    </recommendedName>
    <alternativeName>
        <fullName evidence="7">2 Ig domain protein zig-6</fullName>
    </alternativeName>
</protein>
<dbReference type="EMBL" id="BX284606">
    <property type="protein sequence ID" value="CCD68815.1"/>
    <property type="molecule type" value="Genomic_DNA"/>
</dbReference>
<dbReference type="PIR" id="T29925">
    <property type="entry name" value="T29925"/>
</dbReference>
<dbReference type="RefSeq" id="NP_508882.3">
    <property type="nucleotide sequence ID" value="NM_076481.8"/>
</dbReference>
<dbReference type="SMR" id="Q22125"/>
<dbReference type="STRING" id="6239.T03G11.8.1"/>
<dbReference type="GlyCosmos" id="Q22125">
    <property type="glycosylation" value="2 sites, No reported glycans"/>
</dbReference>
<dbReference type="PaxDb" id="6239-T03G11.8"/>
<dbReference type="PeptideAtlas" id="Q22125"/>
<dbReference type="EnsemblMetazoa" id="T03G11.8.1">
    <property type="protein sequence ID" value="T03G11.8.1"/>
    <property type="gene ID" value="WBGene00006983"/>
</dbReference>
<dbReference type="GeneID" id="192089"/>
<dbReference type="KEGG" id="cel:CELE_T03G11.8"/>
<dbReference type="UCSC" id="T03G11.8">
    <property type="organism name" value="c. elegans"/>
</dbReference>
<dbReference type="AGR" id="WB:WBGene00006983"/>
<dbReference type="CTD" id="192089"/>
<dbReference type="WormBase" id="T03G11.8">
    <property type="protein sequence ID" value="CE40660"/>
    <property type="gene ID" value="WBGene00006983"/>
    <property type="gene designation" value="zig-6"/>
</dbReference>
<dbReference type="eggNOG" id="ENOG502T0ZU">
    <property type="taxonomic scope" value="Eukaryota"/>
</dbReference>
<dbReference type="HOGENOM" id="CLU_101115_0_0_1"/>
<dbReference type="InParanoid" id="Q22125"/>
<dbReference type="OMA" id="VITYWTR"/>
<dbReference type="OrthoDB" id="504170at2759"/>
<dbReference type="PhylomeDB" id="Q22125"/>
<dbReference type="PRO" id="PR:Q22125"/>
<dbReference type="Proteomes" id="UP000001940">
    <property type="component" value="Chromosome X"/>
</dbReference>
<dbReference type="Bgee" id="WBGene00006983">
    <property type="expression patterns" value="Expressed in larva and 4 other cell types or tissues"/>
</dbReference>
<dbReference type="GO" id="GO:0005576">
    <property type="term" value="C:extracellular region"/>
    <property type="evidence" value="ECO:0007669"/>
    <property type="project" value="UniProtKB-SubCell"/>
</dbReference>
<dbReference type="GO" id="GO:0016020">
    <property type="term" value="C:membrane"/>
    <property type="evidence" value="ECO:0000250"/>
    <property type="project" value="WormBase"/>
</dbReference>
<dbReference type="GO" id="GO:0032589">
    <property type="term" value="C:neuron projection membrane"/>
    <property type="evidence" value="ECO:0000318"/>
    <property type="project" value="GO_Central"/>
</dbReference>
<dbReference type="GO" id="GO:0042592">
    <property type="term" value="P:homeostatic process"/>
    <property type="evidence" value="ECO:0000315"/>
    <property type="project" value="WormBase"/>
</dbReference>
<dbReference type="GO" id="GO:0050808">
    <property type="term" value="P:synapse organization"/>
    <property type="evidence" value="ECO:0000318"/>
    <property type="project" value="GO_Central"/>
</dbReference>
<dbReference type="CDD" id="cd00096">
    <property type="entry name" value="Ig"/>
    <property type="match status" value="1"/>
</dbReference>
<dbReference type="FunFam" id="2.60.40.10:FF:003584">
    <property type="match status" value="1"/>
</dbReference>
<dbReference type="FunFam" id="2.60.40.10:FF:002767">
    <property type="entry name" value="Zwei Ig domain protein zig-6"/>
    <property type="match status" value="1"/>
</dbReference>
<dbReference type="Gene3D" id="2.60.40.10">
    <property type="entry name" value="Immunoglobulins"/>
    <property type="match status" value="2"/>
</dbReference>
<dbReference type="InterPro" id="IPR007110">
    <property type="entry name" value="Ig-like_dom"/>
</dbReference>
<dbReference type="InterPro" id="IPR036179">
    <property type="entry name" value="Ig-like_dom_sf"/>
</dbReference>
<dbReference type="InterPro" id="IPR013783">
    <property type="entry name" value="Ig-like_fold"/>
</dbReference>
<dbReference type="InterPro" id="IPR003006">
    <property type="entry name" value="Ig/MHC_CS"/>
</dbReference>
<dbReference type="InterPro" id="IPR003599">
    <property type="entry name" value="Ig_sub"/>
</dbReference>
<dbReference type="InterPro" id="IPR003598">
    <property type="entry name" value="Ig_sub2"/>
</dbReference>
<dbReference type="InterPro" id="IPR013151">
    <property type="entry name" value="Immunoglobulin_dom"/>
</dbReference>
<dbReference type="InterPro" id="IPR051170">
    <property type="entry name" value="Neural/epithelial_adhesion"/>
</dbReference>
<dbReference type="PANTHER" id="PTHR12231">
    <property type="entry name" value="CTX-RELATED TYPE I TRANSMEMBRANE PROTEIN"/>
    <property type="match status" value="1"/>
</dbReference>
<dbReference type="PANTHER" id="PTHR12231:SF253">
    <property type="entry name" value="DPR-INTERACTING PROTEIN ETA, ISOFORM B-RELATED"/>
    <property type="match status" value="1"/>
</dbReference>
<dbReference type="Pfam" id="PF00047">
    <property type="entry name" value="ig"/>
    <property type="match status" value="1"/>
</dbReference>
<dbReference type="Pfam" id="PF13927">
    <property type="entry name" value="Ig_3"/>
    <property type="match status" value="1"/>
</dbReference>
<dbReference type="SMART" id="SM00409">
    <property type="entry name" value="IG"/>
    <property type="match status" value="2"/>
</dbReference>
<dbReference type="SMART" id="SM00408">
    <property type="entry name" value="IGc2"/>
    <property type="match status" value="2"/>
</dbReference>
<dbReference type="SUPFAM" id="SSF48726">
    <property type="entry name" value="Immunoglobulin"/>
    <property type="match status" value="2"/>
</dbReference>
<dbReference type="PROSITE" id="PS50835">
    <property type="entry name" value="IG_LIKE"/>
    <property type="match status" value="2"/>
</dbReference>
<dbReference type="PROSITE" id="PS00290">
    <property type="entry name" value="IG_MHC"/>
    <property type="match status" value="1"/>
</dbReference>
<evidence type="ECO:0000255" key="1"/>
<evidence type="ECO:0000255" key="2">
    <source>
        <dbReference type="PROSITE-ProRule" id="PRU00114"/>
    </source>
</evidence>
<evidence type="ECO:0000255" key="3">
    <source>
        <dbReference type="PROSITE-ProRule" id="PRU00498"/>
    </source>
</evidence>
<evidence type="ECO:0000269" key="4">
    <source>
    </source>
</evidence>
<evidence type="ECO:0000269" key="5">
    <source>
    </source>
</evidence>
<evidence type="ECO:0000269" key="6">
    <source>
    </source>
</evidence>
<evidence type="ECO:0000303" key="7">
    <source>
    </source>
</evidence>
<evidence type="ECO:0000305" key="8"/>
<evidence type="ECO:0000312" key="9">
    <source>
        <dbReference type="Proteomes" id="UP000001940"/>
    </source>
</evidence>
<evidence type="ECO:0000312" key="10">
    <source>
        <dbReference type="WormBase" id="T03G11.8"/>
    </source>
</evidence>
<keyword id="KW-1015">Disulfide bond</keyword>
<keyword id="KW-0325">Glycoprotein</keyword>
<keyword id="KW-0393">Immunoglobulin domain</keyword>
<keyword id="KW-1185">Reference proteome</keyword>
<keyword id="KW-0677">Repeat</keyword>
<keyword id="KW-0964">Secreted</keyword>
<keyword id="KW-0732">Signal</keyword>
<gene>
    <name evidence="10" type="primary">zig-6</name>
    <name evidence="10" type="ORF">T03G11.8</name>
</gene>